<protein>
    <recommendedName>
        <fullName evidence="1">UPF0346 protein LACR_2287</fullName>
    </recommendedName>
</protein>
<reference key="1">
    <citation type="journal article" date="2006" name="Proc. Natl. Acad. Sci. U.S.A.">
        <title>Comparative genomics of the lactic acid bacteria.</title>
        <authorList>
            <person name="Makarova K.S."/>
            <person name="Slesarev A."/>
            <person name="Wolf Y.I."/>
            <person name="Sorokin A."/>
            <person name="Mirkin B."/>
            <person name="Koonin E.V."/>
            <person name="Pavlov A."/>
            <person name="Pavlova N."/>
            <person name="Karamychev V."/>
            <person name="Polouchine N."/>
            <person name="Shakhova V."/>
            <person name="Grigoriev I."/>
            <person name="Lou Y."/>
            <person name="Rohksar D."/>
            <person name="Lucas S."/>
            <person name="Huang K."/>
            <person name="Goodstein D.M."/>
            <person name="Hawkins T."/>
            <person name="Plengvidhya V."/>
            <person name="Welker D."/>
            <person name="Hughes J."/>
            <person name="Goh Y."/>
            <person name="Benson A."/>
            <person name="Baldwin K."/>
            <person name="Lee J.-H."/>
            <person name="Diaz-Muniz I."/>
            <person name="Dosti B."/>
            <person name="Smeianov V."/>
            <person name="Wechter W."/>
            <person name="Barabote R."/>
            <person name="Lorca G."/>
            <person name="Altermann E."/>
            <person name="Barrangou R."/>
            <person name="Ganesan B."/>
            <person name="Xie Y."/>
            <person name="Rawsthorne H."/>
            <person name="Tamir D."/>
            <person name="Parker C."/>
            <person name="Breidt F."/>
            <person name="Broadbent J.R."/>
            <person name="Hutkins R."/>
            <person name="O'Sullivan D."/>
            <person name="Steele J."/>
            <person name="Unlu G."/>
            <person name="Saier M.H. Jr."/>
            <person name="Klaenhammer T."/>
            <person name="Richardson P."/>
            <person name="Kozyavkin S."/>
            <person name="Weimer B.C."/>
            <person name="Mills D.A."/>
        </authorList>
    </citation>
    <scope>NUCLEOTIDE SEQUENCE [LARGE SCALE GENOMIC DNA]</scope>
    <source>
        <strain>SK11</strain>
    </source>
</reference>
<accession>Q02WC9</accession>
<feature type="chain" id="PRO_0000298746" description="UPF0346 protein LACR_2287">
    <location>
        <begin position="1"/>
        <end position="69"/>
    </location>
</feature>
<dbReference type="EMBL" id="CP000425">
    <property type="protein sequence ID" value="ABJ73743.1"/>
    <property type="molecule type" value="Genomic_DNA"/>
</dbReference>
<dbReference type="RefSeq" id="WP_011677077.1">
    <property type="nucleotide sequence ID" value="NC_008527.1"/>
</dbReference>
<dbReference type="SMR" id="Q02WC9"/>
<dbReference type="KEGG" id="llc:LACR_2287"/>
<dbReference type="HOGENOM" id="CLU_177534_1_0_9"/>
<dbReference type="Proteomes" id="UP000000240">
    <property type="component" value="Chromosome"/>
</dbReference>
<dbReference type="Gene3D" id="1.10.150.260">
    <property type="entry name" value="YozE SAM-like"/>
    <property type="match status" value="1"/>
</dbReference>
<dbReference type="HAMAP" id="MF_01538">
    <property type="entry name" value="UPF0346"/>
    <property type="match status" value="1"/>
</dbReference>
<dbReference type="InterPro" id="IPR010673">
    <property type="entry name" value="UPF0346"/>
</dbReference>
<dbReference type="InterPro" id="IPR023089">
    <property type="entry name" value="YozE_SAM-like"/>
</dbReference>
<dbReference type="InterPro" id="IPR036806">
    <property type="entry name" value="YozE_SAM-like_sf"/>
</dbReference>
<dbReference type="NCBIfam" id="NF010193">
    <property type="entry name" value="PRK13672.1"/>
    <property type="match status" value="1"/>
</dbReference>
<dbReference type="Pfam" id="PF06855">
    <property type="entry name" value="YozE_SAM_like"/>
    <property type="match status" value="1"/>
</dbReference>
<dbReference type="PIRSF" id="PIRSF037262">
    <property type="entry name" value="UCP037262"/>
    <property type="match status" value="1"/>
</dbReference>
<dbReference type="SUPFAM" id="SSF140652">
    <property type="entry name" value="YozE-like"/>
    <property type="match status" value="1"/>
</dbReference>
<gene>
    <name type="ordered locus">LACR_2287</name>
</gene>
<comment type="similarity">
    <text evidence="1">Belongs to the UPF0346 family.</text>
</comment>
<organism>
    <name type="scientific">Lactococcus lactis subsp. cremoris (strain SK11)</name>
    <dbReference type="NCBI Taxonomy" id="272622"/>
    <lineage>
        <taxon>Bacteria</taxon>
        <taxon>Bacillati</taxon>
        <taxon>Bacillota</taxon>
        <taxon>Bacilli</taxon>
        <taxon>Lactobacillales</taxon>
        <taxon>Streptococcaceae</taxon>
        <taxon>Lactococcus</taxon>
        <taxon>Lactococcus cremoris subsp. cremoris</taxon>
    </lineage>
</organism>
<evidence type="ECO:0000255" key="1">
    <source>
        <dbReference type="HAMAP-Rule" id="MF_01538"/>
    </source>
</evidence>
<proteinExistence type="inferred from homology"/>
<sequence>MTFYNYLMRHRAPVEKDDATRLANLVFQDPLFPKQSKDFDEISTYLETEAPFYFNLTLFDNVWLSYLEA</sequence>
<name>Y2287_LACLS</name>